<evidence type="ECO:0000255" key="1">
    <source>
        <dbReference type="HAMAP-Rule" id="MF_00658"/>
    </source>
</evidence>
<keyword id="KW-0963">Cytoplasm</keyword>
<keyword id="KW-0489">Methyltransferase</keyword>
<keyword id="KW-1185">Reference proteome</keyword>
<keyword id="KW-0698">rRNA processing</keyword>
<keyword id="KW-0949">S-adenosyl-L-methionine</keyword>
<keyword id="KW-0808">Transferase</keyword>
<protein>
    <recommendedName>
        <fullName evidence="1">Ribosomal RNA large subunit methyltransferase H</fullName>
        <ecNumber evidence="1">2.1.1.177</ecNumber>
    </recommendedName>
    <alternativeName>
        <fullName evidence="1">23S rRNA (pseudouridine1915-N3)-methyltransferase</fullName>
    </alternativeName>
    <alternativeName>
        <fullName evidence="1">23S rRNA m3Psi1915 methyltransferase</fullName>
    </alternativeName>
    <alternativeName>
        <fullName evidence="1">rRNA (pseudouridine-N3-)-methyltransferase RlmH</fullName>
    </alternativeName>
</protein>
<proteinExistence type="inferred from homology"/>
<comment type="function">
    <text evidence="1">Specifically methylates the pseudouridine at position 1915 (m3Psi1915) in 23S rRNA.</text>
</comment>
<comment type="catalytic activity">
    <reaction evidence="1">
        <text>pseudouridine(1915) in 23S rRNA + S-adenosyl-L-methionine = N(3)-methylpseudouridine(1915) in 23S rRNA + S-adenosyl-L-homocysteine + H(+)</text>
        <dbReference type="Rhea" id="RHEA:42752"/>
        <dbReference type="Rhea" id="RHEA-COMP:10221"/>
        <dbReference type="Rhea" id="RHEA-COMP:10222"/>
        <dbReference type="ChEBI" id="CHEBI:15378"/>
        <dbReference type="ChEBI" id="CHEBI:57856"/>
        <dbReference type="ChEBI" id="CHEBI:59789"/>
        <dbReference type="ChEBI" id="CHEBI:65314"/>
        <dbReference type="ChEBI" id="CHEBI:74486"/>
        <dbReference type="EC" id="2.1.1.177"/>
    </reaction>
</comment>
<comment type="subunit">
    <text evidence="1">Homodimer.</text>
</comment>
<comment type="subcellular location">
    <subcellularLocation>
        <location evidence="1">Cytoplasm</location>
    </subcellularLocation>
</comment>
<comment type="similarity">
    <text evidence="1">Belongs to the RNA methyltransferase RlmH family.</text>
</comment>
<feature type="chain" id="PRO_1000061830" description="Ribosomal RNA large subunit methyltransferase H">
    <location>
        <begin position="1"/>
        <end position="159"/>
    </location>
</feature>
<feature type="binding site" evidence="1">
    <location>
        <position position="76"/>
    </location>
    <ligand>
        <name>S-adenosyl-L-methionine</name>
        <dbReference type="ChEBI" id="CHEBI:59789"/>
    </ligand>
</feature>
<feature type="binding site" evidence="1">
    <location>
        <position position="107"/>
    </location>
    <ligand>
        <name>S-adenosyl-L-methionine</name>
        <dbReference type="ChEBI" id="CHEBI:59789"/>
    </ligand>
</feature>
<feature type="binding site" evidence="1">
    <location>
        <begin position="126"/>
        <end position="131"/>
    </location>
    <ligand>
        <name>S-adenosyl-L-methionine</name>
        <dbReference type="ChEBI" id="CHEBI:59789"/>
    </ligand>
</feature>
<dbReference type="EC" id="2.1.1.177" evidence="1"/>
<dbReference type="EMBL" id="AM260479">
    <property type="protein sequence ID" value="CAJ92057.1"/>
    <property type="molecule type" value="Genomic_DNA"/>
</dbReference>
<dbReference type="RefSeq" id="WP_011614787.1">
    <property type="nucleotide sequence ID" value="NZ_CP039287.1"/>
</dbReference>
<dbReference type="SMR" id="Q0KD64"/>
<dbReference type="STRING" id="381666.H16_A0911"/>
<dbReference type="GeneID" id="34311027"/>
<dbReference type="KEGG" id="reh:H16_A0911"/>
<dbReference type="eggNOG" id="COG1576">
    <property type="taxonomic scope" value="Bacteria"/>
</dbReference>
<dbReference type="HOGENOM" id="CLU_100552_1_0_4"/>
<dbReference type="OrthoDB" id="9806643at2"/>
<dbReference type="Proteomes" id="UP000008210">
    <property type="component" value="Chromosome 1"/>
</dbReference>
<dbReference type="GO" id="GO:0005737">
    <property type="term" value="C:cytoplasm"/>
    <property type="evidence" value="ECO:0007669"/>
    <property type="project" value="UniProtKB-SubCell"/>
</dbReference>
<dbReference type="GO" id="GO:0070038">
    <property type="term" value="F:rRNA (pseudouridine-N3-)-methyltransferase activity"/>
    <property type="evidence" value="ECO:0007669"/>
    <property type="project" value="UniProtKB-UniRule"/>
</dbReference>
<dbReference type="CDD" id="cd18081">
    <property type="entry name" value="RlmH-like"/>
    <property type="match status" value="1"/>
</dbReference>
<dbReference type="Gene3D" id="3.40.1280.10">
    <property type="match status" value="1"/>
</dbReference>
<dbReference type="HAMAP" id="MF_00658">
    <property type="entry name" value="23SrRNA_methyltr_H"/>
    <property type="match status" value="1"/>
</dbReference>
<dbReference type="InterPro" id="IPR029028">
    <property type="entry name" value="Alpha/beta_knot_MTases"/>
</dbReference>
<dbReference type="InterPro" id="IPR003742">
    <property type="entry name" value="RlmH-like"/>
</dbReference>
<dbReference type="InterPro" id="IPR029026">
    <property type="entry name" value="tRNA_m1G_MTases_N"/>
</dbReference>
<dbReference type="NCBIfam" id="NF000986">
    <property type="entry name" value="PRK00103.1-4"/>
    <property type="match status" value="1"/>
</dbReference>
<dbReference type="NCBIfam" id="TIGR00246">
    <property type="entry name" value="tRNA_RlmH_YbeA"/>
    <property type="match status" value="1"/>
</dbReference>
<dbReference type="PANTHER" id="PTHR33603">
    <property type="entry name" value="METHYLTRANSFERASE"/>
    <property type="match status" value="1"/>
</dbReference>
<dbReference type="PANTHER" id="PTHR33603:SF1">
    <property type="entry name" value="RIBOSOMAL RNA LARGE SUBUNIT METHYLTRANSFERASE H"/>
    <property type="match status" value="1"/>
</dbReference>
<dbReference type="Pfam" id="PF02590">
    <property type="entry name" value="SPOUT_MTase"/>
    <property type="match status" value="1"/>
</dbReference>
<dbReference type="PIRSF" id="PIRSF004505">
    <property type="entry name" value="MT_bac"/>
    <property type="match status" value="1"/>
</dbReference>
<dbReference type="SUPFAM" id="SSF75217">
    <property type="entry name" value="alpha/beta knot"/>
    <property type="match status" value="1"/>
</dbReference>
<name>RLMH_CUPNH</name>
<accession>Q0KD64</accession>
<gene>
    <name evidence="1" type="primary">rlmH</name>
    <name type="ordered locus">H16_A0911</name>
</gene>
<reference key="1">
    <citation type="journal article" date="2006" name="Nat. Biotechnol.">
        <title>Genome sequence of the bioplastic-producing 'Knallgas' bacterium Ralstonia eutropha H16.</title>
        <authorList>
            <person name="Pohlmann A."/>
            <person name="Fricke W.F."/>
            <person name="Reinecke F."/>
            <person name="Kusian B."/>
            <person name="Liesegang H."/>
            <person name="Cramm R."/>
            <person name="Eitinger T."/>
            <person name="Ewering C."/>
            <person name="Poetter M."/>
            <person name="Schwartz E."/>
            <person name="Strittmatter A."/>
            <person name="Voss I."/>
            <person name="Gottschalk G."/>
            <person name="Steinbuechel A."/>
            <person name="Friedrich B."/>
            <person name="Bowien B."/>
        </authorList>
    </citation>
    <scope>NUCLEOTIDE SEQUENCE [LARGE SCALE GENOMIC DNA]</scope>
    <source>
        <strain>ATCC 17699 / DSM 428 / KCTC 22496 / NCIMB 10442 / H16 / Stanier 337</strain>
    </source>
</reference>
<sequence>MQLVIVAVGHKMPGWIETGFSEYAKRMPPELRIELREVKPETRSSSNNAATVMQREAARIEAVLGSLSKQCRIVALDERGRDFTTVQLAAQLTDWQREGGDVAFLIGGADGLDPALKARASTLIRLSSLTLPHGMVRVLLAEQLYRAWSVTQNHPYHRA</sequence>
<organism>
    <name type="scientific">Cupriavidus necator (strain ATCC 17699 / DSM 428 / KCTC 22496 / NCIMB 10442 / H16 / Stanier 337)</name>
    <name type="common">Ralstonia eutropha</name>
    <dbReference type="NCBI Taxonomy" id="381666"/>
    <lineage>
        <taxon>Bacteria</taxon>
        <taxon>Pseudomonadati</taxon>
        <taxon>Pseudomonadota</taxon>
        <taxon>Betaproteobacteria</taxon>
        <taxon>Burkholderiales</taxon>
        <taxon>Burkholderiaceae</taxon>
        <taxon>Cupriavidus</taxon>
    </lineage>
</organism>